<accession>P0DXA4</accession>
<dbReference type="EMBL" id="CABHQK010000182">
    <property type="status" value="NOT_ANNOTATED_CDS"/>
    <property type="molecule type" value="Genomic_DNA"/>
</dbReference>
<dbReference type="RefSeq" id="WP_145567547.1">
    <property type="nucleotide sequence ID" value="NZ_CABHQK010000182.1"/>
</dbReference>
<dbReference type="PDB" id="7N34">
    <property type="method" value="X-ray"/>
    <property type="resolution" value="1.90 A"/>
    <property type="chains" value="A=78-208"/>
</dbReference>
<dbReference type="PDB" id="7N35">
    <property type="method" value="X-ray"/>
    <property type="resolution" value="2.60 A"/>
    <property type="chains" value="A/B=78-208"/>
</dbReference>
<dbReference type="PDBsum" id="7N34"/>
<dbReference type="PDBsum" id="7N35"/>
<dbReference type="SMR" id="P0DXA4"/>
<dbReference type="GO" id="GO:0005886">
    <property type="term" value="C:plasma membrane"/>
    <property type="evidence" value="ECO:0007669"/>
    <property type="project" value="UniProtKB-SubCell"/>
</dbReference>
<dbReference type="GO" id="GO:0000166">
    <property type="term" value="F:nucleotide binding"/>
    <property type="evidence" value="ECO:0007669"/>
    <property type="project" value="UniProtKB-KW"/>
</dbReference>
<dbReference type="GO" id="GO:0051607">
    <property type="term" value="P:defense response to virus"/>
    <property type="evidence" value="ECO:0007669"/>
    <property type="project" value="UniProtKB-KW"/>
</dbReference>
<dbReference type="InterPro" id="IPR041208">
    <property type="entry name" value="Cap15"/>
</dbReference>
<dbReference type="Pfam" id="PF18153">
    <property type="entry name" value="Cap15_CD_rec"/>
    <property type="match status" value="1"/>
</dbReference>
<reference evidence="7" key="1">
    <citation type="submission" date="2019-07" db="EMBL/GenBank/DDBJ databases">
        <authorList>
            <person name="Criscuolo A."/>
        </authorList>
    </citation>
    <scope>NUCLEOTIDE SEQUENCE [LARGE SCALE GENOMIC DNA]</scope>
    <source>
        <strain>IP28587</strain>
    </source>
</reference>
<reference evidence="8 9" key="2">
    <citation type="journal article" date="2021" name="Mol. Cell">
        <title>Effector-mediated membrane disruption controls cell death in CBASS antiphage defense.</title>
        <authorList>
            <person name="Duncan-Lowey B."/>
            <person name="McNamara-Bordewick N.K."/>
            <person name="Tal N."/>
            <person name="Sorek R."/>
            <person name="Kranzusch P.J."/>
        </authorList>
    </citation>
    <scope>X-RAY CRYSTALLOGRAPHY (1.90 ANGSTROMS) OF 78-208</scope>
    <scope>FUNCTION</scope>
    <scope>SUBUNIT</scope>
    <scope>DOMAIN</scope>
    <scope>NUCLEOTIDE-BINDING</scope>
    <scope>MUTAGENESIS OF 78-TRP--CYS-88; TRP-120; THR-129; LEU-152; TYR-153; TYR-155; ASN-157; PHE-172; TYR-188 AND MET-200</scope>
</reference>
<protein>
    <recommendedName>
        <fullName evidence="4">CD-NTase-associated protein 15</fullName>
        <shortName evidence="4">YaCap15</shortName>
    </recommendedName>
</protein>
<feature type="chain" id="PRO_0000459803" description="CD-NTase-associated protein 15">
    <location>
        <begin position="1"/>
        <end position="208"/>
    </location>
</feature>
<feature type="transmembrane region" description="Helical" evidence="2">
    <location>
        <begin position="20"/>
        <end position="40"/>
    </location>
</feature>
<feature type="transmembrane region" description="Helical" evidence="2">
    <location>
        <begin position="52"/>
        <end position="72"/>
    </location>
</feature>
<feature type="mutagenesis site" description="Beta barrel no longer oligomerizes, dimerizes in presence of 3',3'-cyclic di-UMP (c-di-UMP) or 3',3'-cyclic UMP-AMP (c-di-UAMP); when associated with A-120." evidence="3">
    <location>
        <begin position="78"/>
        <end position="88"/>
    </location>
</feature>
<feature type="mutagenesis site" description="Complete loss of protection against all phage tested in E.coli, beta barrel no longer oligomerizes, dimerizes in presence of c-di-UMP or c-di-UAMP; when associatd with 78-W--C-88 del." evidence="3">
    <original>W</original>
    <variation>A</variation>
    <location>
        <position position="120"/>
    </location>
</feature>
<feature type="mutagenesis site" description="Beta barrel no longer binds c-di-UMP." evidence="3">
    <original>T</original>
    <variation>Q</variation>
    <location>
        <position position="129"/>
    </location>
</feature>
<feature type="mutagenesis site" description="Complete loss of protection against all phage tested in E.coli." evidence="3">
    <original>L</original>
    <variation>E</variation>
    <location>
        <position position="152"/>
    </location>
</feature>
<feature type="mutagenesis site" description="Beta barrel has decreased ability to bind c-di-UMP, no change in protection against phage in E.coli." evidence="3">
    <original>Y</original>
    <variation>F</variation>
    <location>
        <position position="153"/>
    </location>
</feature>
<feature type="mutagenesis site" description="Beta barrel has decreased ability to bind c-di-UMP, no change in protection against phage in E.coli." evidence="3">
    <original>Y</original>
    <variation>F</variation>
    <location>
        <position position="155"/>
    </location>
</feature>
<feature type="mutagenesis site" description="Beta barrel no longer binds c-di-UMP, complete loss of protection against all phage tested in E.coli." evidence="3">
    <original>N</original>
    <variation>Q</variation>
    <location>
        <position position="157"/>
    </location>
</feature>
<feature type="mutagenesis site" description="Complete loss of protection against all phage tested in E.coli." evidence="3">
    <original>F</original>
    <variation>D</variation>
    <location>
        <position position="172"/>
    </location>
</feature>
<feature type="mutagenesis site" description="Beta barrel no longer binds c-di-UMP." evidence="3">
    <original>Y</original>
    <variation>F</variation>
    <location>
        <position position="188"/>
    </location>
</feature>
<feature type="mutagenesis site" description="Beta barrel has decreased ability to bind c-di-UMP, decreased protein stability." evidence="3">
    <original>M</original>
    <variation>I</variation>
    <location>
        <position position="200"/>
    </location>
</feature>
<feature type="strand" evidence="10">
    <location>
        <begin position="94"/>
        <end position="102"/>
    </location>
</feature>
<feature type="strand" evidence="11">
    <location>
        <begin position="104"/>
        <end position="106"/>
    </location>
</feature>
<feature type="strand" evidence="10">
    <location>
        <begin position="109"/>
        <end position="119"/>
    </location>
</feature>
<feature type="strand" evidence="10">
    <location>
        <begin position="122"/>
        <end position="128"/>
    </location>
</feature>
<feature type="strand" evidence="10">
    <location>
        <begin position="133"/>
        <end position="144"/>
    </location>
</feature>
<feature type="turn" evidence="10">
    <location>
        <begin position="145"/>
        <end position="147"/>
    </location>
</feature>
<feature type="strand" evidence="10">
    <location>
        <begin position="148"/>
        <end position="157"/>
    </location>
</feature>
<feature type="strand" evidence="10">
    <location>
        <begin position="171"/>
        <end position="177"/>
    </location>
</feature>
<feature type="strand" evidence="10">
    <location>
        <begin position="181"/>
        <end position="190"/>
    </location>
</feature>
<feature type="strand" evidence="10">
    <location>
        <begin position="196"/>
        <end position="204"/>
    </location>
</feature>
<organism>
    <name type="scientific">Yersinia aleksiciae</name>
    <dbReference type="NCBI Taxonomy" id="263819"/>
    <lineage>
        <taxon>Bacteria</taxon>
        <taxon>Pseudomonadati</taxon>
        <taxon>Pseudomonadota</taxon>
        <taxon>Gammaproteobacteria</taxon>
        <taxon>Enterobacterales</taxon>
        <taxon>Yersiniaceae</taxon>
        <taxon>Yersinia</taxon>
    </lineage>
</organism>
<comment type="function">
    <text evidence="3 6">Effector protein of a CBASS antivirus system. CBASS (cyclic oligonucleotide-based antiphage signaling system) provides immunity against bacteriophages. The CD-NTase protein (CdnE) synthesizes cyclic nucleotides in response to infection; these serve as specific second messenger signals. The signals activate a diverse range of effectors, leading to bacterial cell death and thus abortive phage infection. The C-terminal beta barrel binds to and is stabilized by cyclic dinucleotides; 3',3'-cyclic UMP-UMP (c-di-UMP), 3',3'-cyclic UMP-AMP (c-di-UAMP), 3',3'-cyclic UMP-GMP (c-di-UGMP) and 3',3'-cyclic UMP-CMP (c-di-UCMP) bind to and stabilize the beta barrel whereas 3',3'-cyclic di-AMP (c-di-AMP) does not bind the beta barrel (PubMed:34784509). Upon binding of c-di-UMP (or another cyclic dinucleotide) probably oligomerizes, inducing cell membrane shrinkage and rupture, leading to cell death (Probable) (PubMed:34784509).</text>
</comment>
<comment type="function">
    <text evidence="3">Protects E.coli against phage infection. When the CBASS operon (cap15-cdnE) is introduced in E.coli MG1655 it protects against phages T2, T4, T5, T6, SECPhi4, SECPhi6, SECPhi17, SECPhi18 and SECPhi27, but not against phage T7 (PubMed:34784509).</text>
</comment>
<comment type="subunit">
    <text evidence="6">The beta barrel domain oligomerizes; in the presence of c-di-UMP or c-di-UAMP higher-level oligomers are detected (PubMed:34784509).</text>
</comment>
<comment type="subcellular location">
    <subcellularLocation>
        <location evidence="1">Cell inner membrane</location>
        <topology evidence="2">Multi-pass membrane protein</topology>
    </subcellularLocation>
    <text evidence="6">In the absence of cyclic dinucleotides forms puncta mostly found at the cell poles. In the presence of cyclic dinucleotides redistributes as puncta over the cell inner membrane as it collapses away from the cell wall; cells die rapidly as the cell inner membrane shrinks from the cell wall.</text>
</comment>
<comment type="domain">
    <text evidence="3">Cell toxicity relies on the transmembrane domain; its replacement by a SUMO domain prevents cell death in cells also expressing DncV from V.cholerae (PubMed:34784509). The C-terminus (residues 78-208) forms a minimal, eight-stranded beta barrel (PubMed:34784509). Trp-96 stacks against Arg-204 and forms a hydrogen bond with Leu-92 to close the barrel. A set of conserved residues in the 'top' of the barrel (Thr-129; Tyr-153; Tyr-155; Asn-157; Tyr-188 and Met-200) surround a probable cyclic dinucleotide-binding site; when mutated these residues decrease or abolish nucleotide binding and impact protection against phage in vivo (PubMed:34784509). In the C-terminus two possible oligomerization domains have been identified. In interface 1 beta-strand 1 (residues 78-88) forms an anti-parallel beta-sheet with beta-strand 1 from a neighboring subunit and is further stabilized by inter-subunit stacking of Trp-120. Interface 2 is formed by hydrophobic residues facing out of the barrel (Ile-142; Leu-152; Phe-172; Phe-189 and Tyr-197).</text>
</comment>
<comment type="similarity">
    <text evidence="5">Belongs to the CBASS Cap15 membrane effector family.</text>
</comment>
<proteinExistence type="evidence at protein level"/>
<keyword id="KW-0002">3D-structure</keyword>
<keyword id="KW-0051">Antiviral defense</keyword>
<keyword id="KW-0997">Cell inner membrane</keyword>
<keyword id="KW-1003">Cell membrane</keyword>
<keyword id="KW-0472">Membrane</keyword>
<keyword id="KW-0547">Nucleotide-binding</keyword>
<keyword id="KW-0812">Transmembrane</keyword>
<keyword id="KW-1133">Transmembrane helix</keyword>
<name>CAP15_YERAE</name>
<sequence>MKSHEYIVICGLNRSKVGRYIAIVASFLSFISIFLALTALEWLKNYHINSHIPASVFSLISAGGIYMGLYAWFDKNLWQNSYLGKFLCVPNLEGRWHVDGHTRSEGGNTWEGELKIVQTWDKVRIHLKTKASHSDSVTASIIYDKGIGYQLLYNYRNQPKTGEEHLTSHVGFAEFRFDADLKSAEGHYFNGQGRATYGTMTITRIEHA</sequence>
<gene>
    <name type="primary">cap15</name>
    <name type="ORF">FS896_RS19155</name>
</gene>
<evidence type="ECO:0000250" key="1">
    <source>
        <dbReference type="UniProtKB" id="P0DXA2"/>
    </source>
</evidence>
<evidence type="ECO:0000255" key="2"/>
<evidence type="ECO:0000269" key="3">
    <source>
    </source>
</evidence>
<evidence type="ECO:0000303" key="4">
    <source>
    </source>
</evidence>
<evidence type="ECO:0000305" key="5"/>
<evidence type="ECO:0000305" key="6">
    <source>
    </source>
</evidence>
<evidence type="ECO:0000312" key="7">
    <source>
        <dbReference type="EMBL" id="CABHQK010000182"/>
    </source>
</evidence>
<evidence type="ECO:0000312" key="8">
    <source>
        <dbReference type="PDB" id="7N34"/>
    </source>
</evidence>
<evidence type="ECO:0000312" key="9">
    <source>
        <dbReference type="PDB" id="7N35"/>
    </source>
</evidence>
<evidence type="ECO:0007829" key="10">
    <source>
        <dbReference type="PDB" id="7N34"/>
    </source>
</evidence>
<evidence type="ECO:0007829" key="11">
    <source>
        <dbReference type="PDB" id="7N35"/>
    </source>
</evidence>